<organism>
    <name type="scientific">African swine fever virus (isolate Warthog/Namibia/Wart80/1980)</name>
    <name type="common">ASFV</name>
    <dbReference type="NCBI Taxonomy" id="561444"/>
    <lineage>
        <taxon>Viruses</taxon>
        <taxon>Varidnaviria</taxon>
        <taxon>Bamfordvirae</taxon>
        <taxon>Nucleocytoviricota</taxon>
        <taxon>Pokkesviricetes</taxon>
        <taxon>Asfuvirales</taxon>
        <taxon>Asfarviridae</taxon>
        <taxon>Asfivirus</taxon>
        <taxon>African swine fever virus</taxon>
    </lineage>
</organism>
<proteinExistence type="inferred from homology"/>
<feature type="chain" id="PRO_0000373306" description="Protein MGF 360-19R">
    <location>
        <begin position="1"/>
        <end position="362"/>
    </location>
</feature>
<feature type="repeat" description="ANK">
    <location>
        <begin position="66"/>
        <end position="98"/>
    </location>
</feature>
<keyword id="KW-0040">ANK repeat</keyword>
<evidence type="ECO:0000250" key="1"/>
<evidence type="ECO:0000305" key="2"/>
<organismHost>
    <name type="scientific">Ornithodoros</name>
    <name type="common">relapsing fever ticks</name>
    <dbReference type="NCBI Taxonomy" id="6937"/>
</organismHost>
<organismHost>
    <name type="scientific">Phacochoerus aethiopicus</name>
    <name type="common">Warthog</name>
    <dbReference type="NCBI Taxonomy" id="85517"/>
</organismHost>
<organismHost>
    <name type="scientific">Phacochoerus africanus</name>
    <name type="common">Warthog</name>
    <dbReference type="NCBI Taxonomy" id="41426"/>
</organismHost>
<organismHost>
    <name type="scientific">Potamochoerus larvatus</name>
    <name type="common">Bushpig</name>
    <dbReference type="NCBI Taxonomy" id="273792"/>
</organismHost>
<organismHost>
    <name type="scientific">Sus scrofa</name>
    <name type="common">Pig</name>
    <dbReference type="NCBI Taxonomy" id="9823"/>
</organismHost>
<accession>P0C9R8</accession>
<reference key="1">
    <citation type="submission" date="2003-03" db="EMBL/GenBank/DDBJ databases">
        <title>African swine fever virus genomes.</title>
        <authorList>
            <person name="Kutish G.F."/>
            <person name="Rock D.L."/>
        </authorList>
    </citation>
    <scope>NUCLEOTIDE SEQUENCE [LARGE SCALE GENOMIC DNA]</scope>
</reference>
<gene>
    <name type="ordered locus">War-172</name>
</gene>
<name>36019_ASFWA</name>
<sequence length="362" mass="42407">MPSTLQVLAKKVLALEHKENDHISREYYYHILKCCGLWWHEAPIILCFNGSKQMMIKTPIFEEGILLNTALMKAVQDNNYELIKLFTEWGANINYGLVSINTEHTRDLCRKLGAKEMLERNEVIQIIFKTLDDTTSSNMILCHELFTNNPLLENVNMGEMRMIIHWKMKNLTDLLLDNNSISEILTKFWYGIAVKYNLKDAIQYFYQRFINFNEWRVTCALSFNNVNDLHKMYITEKVHMNNDEMMNLACSIQDKNFSTIYYCFLLGANINQAMFTSVSNYNVFNIFFCIDLGADAFEEGKALAKQKGYNEIVEILSLDIIYSPNTDFLSKIKPEHISFLLKNFYPKNLYIFDRCKPGLYYP</sequence>
<dbReference type="EMBL" id="AY261366">
    <property type="status" value="NOT_ANNOTATED_CDS"/>
    <property type="molecule type" value="Genomic_DNA"/>
</dbReference>
<dbReference type="SMR" id="P0C9R8"/>
<dbReference type="Proteomes" id="UP000000858">
    <property type="component" value="Segment"/>
</dbReference>
<dbReference type="GO" id="GO:0042330">
    <property type="term" value="P:taxis"/>
    <property type="evidence" value="ECO:0007669"/>
    <property type="project" value="InterPro"/>
</dbReference>
<dbReference type="InterPro" id="IPR002595">
    <property type="entry name" value="ASFV_MGF360"/>
</dbReference>
<dbReference type="Pfam" id="PF01671">
    <property type="entry name" value="ASFV_360"/>
    <property type="match status" value="1"/>
</dbReference>
<protein>
    <recommendedName>
        <fullName>Protein MGF 360-19R</fullName>
    </recommendedName>
</protein>
<comment type="function">
    <text evidence="1">Plays a role in virus cell tropism, and may be required for efficient virus replication in macrophages.</text>
</comment>
<comment type="similarity">
    <text evidence="2">Belongs to the asfivirus MGF 360 family.</text>
</comment>